<evidence type="ECO:0000255" key="1">
    <source>
        <dbReference type="HAMAP-Rule" id="MF_01227"/>
    </source>
</evidence>
<evidence type="ECO:0000256" key="2">
    <source>
        <dbReference type="SAM" id="MobiDB-lite"/>
    </source>
</evidence>
<feature type="chain" id="PRO_1000164956" description="CTP synthase">
    <location>
        <begin position="1"/>
        <end position="589"/>
    </location>
</feature>
<feature type="domain" description="Glutamine amidotransferase type-1" evidence="1">
    <location>
        <begin position="306"/>
        <end position="554"/>
    </location>
</feature>
<feature type="region of interest" description="Amidoligase domain" evidence="1">
    <location>
        <begin position="1"/>
        <end position="281"/>
    </location>
</feature>
<feature type="region of interest" description="Disordered" evidence="2">
    <location>
        <begin position="562"/>
        <end position="589"/>
    </location>
</feature>
<feature type="active site" description="Nucleophile; for glutamine hydrolysis" evidence="1">
    <location>
        <position position="396"/>
    </location>
</feature>
<feature type="active site" evidence="1">
    <location>
        <position position="527"/>
    </location>
</feature>
<feature type="active site" evidence="1">
    <location>
        <position position="529"/>
    </location>
</feature>
<feature type="binding site" evidence="1">
    <location>
        <position position="23"/>
    </location>
    <ligand>
        <name>CTP</name>
        <dbReference type="ChEBI" id="CHEBI:37563"/>
        <note>allosteric inhibitor</note>
    </ligand>
</feature>
<feature type="binding site" evidence="1">
    <location>
        <position position="23"/>
    </location>
    <ligand>
        <name>UTP</name>
        <dbReference type="ChEBI" id="CHEBI:46398"/>
    </ligand>
</feature>
<feature type="binding site" evidence="1">
    <location>
        <begin position="24"/>
        <end position="29"/>
    </location>
    <ligand>
        <name>ATP</name>
        <dbReference type="ChEBI" id="CHEBI:30616"/>
    </ligand>
</feature>
<feature type="binding site" evidence="1">
    <location>
        <position position="81"/>
    </location>
    <ligand>
        <name>ATP</name>
        <dbReference type="ChEBI" id="CHEBI:30616"/>
    </ligand>
</feature>
<feature type="binding site" evidence="1">
    <location>
        <position position="81"/>
    </location>
    <ligand>
        <name>Mg(2+)</name>
        <dbReference type="ChEBI" id="CHEBI:18420"/>
    </ligand>
</feature>
<feature type="binding site" evidence="1">
    <location>
        <position position="155"/>
    </location>
    <ligand>
        <name>Mg(2+)</name>
        <dbReference type="ChEBI" id="CHEBI:18420"/>
    </ligand>
</feature>
<feature type="binding site" evidence="1">
    <location>
        <begin position="162"/>
        <end position="164"/>
    </location>
    <ligand>
        <name>CTP</name>
        <dbReference type="ChEBI" id="CHEBI:37563"/>
        <note>allosteric inhibitor</note>
    </ligand>
</feature>
<feature type="binding site" evidence="1">
    <location>
        <begin position="202"/>
        <end position="207"/>
    </location>
    <ligand>
        <name>CTP</name>
        <dbReference type="ChEBI" id="CHEBI:37563"/>
        <note>allosteric inhibitor</note>
    </ligand>
</feature>
<feature type="binding site" evidence="1">
    <location>
        <begin position="202"/>
        <end position="207"/>
    </location>
    <ligand>
        <name>UTP</name>
        <dbReference type="ChEBI" id="CHEBI:46398"/>
    </ligand>
</feature>
<feature type="binding site" evidence="1">
    <location>
        <position position="238"/>
    </location>
    <ligand>
        <name>CTP</name>
        <dbReference type="ChEBI" id="CHEBI:37563"/>
        <note>allosteric inhibitor</note>
    </ligand>
</feature>
<feature type="binding site" evidence="1">
    <location>
        <position position="238"/>
    </location>
    <ligand>
        <name>UTP</name>
        <dbReference type="ChEBI" id="CHEBI:46398"/>
    </ligand>
</feature>
<feature type="binding site" evidence="1">
    <location>
        <position position="369"/>
    </location>
    <ligand>
        <name>L-glutamine</name>
        <dbReference type="ChEBI" id="CHEBI:58359"/>
    </ligand>
</feature>
<feature type="binding site" evidence="1">
    <location>
        <begin position="397"/>
        <end position="400"/>
    </location>
    <ligand>
        <name>L-glutamine</name>
        <dbReference type="ChEBI" id="CHEBI:58359"/>
    </ligand>
</feature>
<feature type="binding site" evidence="1">
    <location>
        <position position="419"/>
    </location>
    <ligand>
        <name>L-glutamine</name>
        <dbReference type="ChEBI" id="CHEBI:58359"/>
    </ligand>
</feature>
<feature type="binding site" evidence="1">
    <location>
        <position position="480"/>
    </location>
    <ligand>
        <name>L-glutamine</name>
        <dbReference type="ChEBI" id="CHEBI:58359"/>
    </ligand>
</feature>
<comment type="function">
    <text evidence="1">Catalyzes the ATP-dependent amination of UTP to CTP with either L-glutamine or ammonia as the source of nitrogen. Regulates intracellular CTP levels through interactions with the four ribonucleotide triphosphates.</text>
</comment>
<comment type="catalytic activity">
    <reaction evidence="1">
        <text>UTP + L-glutamine + ATP + H2O = CTP + L-glutamate + ADP + phosphate + 2 H(+)</text>
        <dbReference type="Rhea" id="RHEA:26426"/>
        <dbReference type="ChEBI" id="CHEBI:15377"/>
        <dbReference type="ChEBI" id="CHEBI:15378"/>
        <dbReference type="ChEBI" id="CHEBI:29985"/>
        <dbReference type="ChEBI" id="CHEBI:30616"/>
        <dbReference type="ChEBI" id="CHEBI:37563"/>
        <dbReference type="ChEBI" id="CHEBI:43474"/>
        <dbReference type="ChEBI" id="CHEBI:46398"/>
        <dbReference type="ChEBI" id="CHEBI:58359"/>
        <dbReference type="ChEBI" id="CHEBI:456216"/>
        <dbReference type="EC" id="6.3.4.2"/>
    </reaction>
</comment>
<comment type="catalytic activity">
    <reaction evidence="1">
        <text>L-glutamine + H2O = L-glutamate + NH4(+)</text>
        <dbReference type="Rhea" id="RHEA:15889"/>
        <dbReference type="ChEBI" id="CHEBI:15377"/>
        <dbReference type="ChEBI" id="CHEBI:28938"/>
        <dbReference type="ChEBI" id="CHEBI:29985"/>
        <dbReference type="ChEBI" id="CHEBI:58359"/>
    </reaction>
</comment>
<comment type="catalytic activity">
    <reaction evidence="1">
        <text>UTP + NH4(+) + ATP = CTP + ADP + phosphate + 2 H(+)</text>
        <dbReference type="Rhea" id="RHEA:16597"/>
        <dbReference type="ChEBI" id="CHEBI:15378"/>
        <dbReference type="ChEBI" id="CHEBI:28938"/>
        <dbReference type="ChEBI" id="CHEBI:30616"/>
        <dbReference type="ChEBI" id="CHEBI:37563"/>
        <dbReference type="ChEBI" id="CHEBI:43474"/>
        <dbReference type="ChEBI" id="CHEBI:46398"/>
        <dbReference type="ChEBI" id="CHEBI:456216"/>
    </reaction>
</comment>
<comment type="activity regulation">
    <text evidence="1">Allosterically activated by GTP, when glutamine is the substrate; GTP has no effect on the reaction when ammonia is the substrate. The allosteric effector GTP functions by stabilizing the protein conformation that binds the tetrahedral intermediate(s) formed during glutamine hydrolysis. Inhibited by the product CTP, via allosteric rather than competitive inhibition.</text>
</comment>
<comment type="pathway">
    <text evidence="1">Pyrimidine metabolism; CTP biosynthesis via de novo pathway; CTP from UDP: step 2/2.</text>
</comment>
<comment type="subunit">
    <text evidence="1">Homotetramer.</text>
</comment>
<comment type="miscellaneous">
    <text evidence="1">CTPSs have evolved a hybrid strategy for distinguishing between UTP and CTP. The overlapping regions of the product feedback inhibitory and substrate sites recognize a common feature in both compounds, the triphosphate moiety. To differentiate isosteric substrate and product pyrimidine rings, an additional pocket far from the expected kinase/ligase catalytic site, specifically recognizes the cytosine and ribose portions of the product inhibitor.</text>
</comment>
<comment type="similarity">
    <text evidence="1">Belongs to the CTP synthase family.</text>
</comment>
<keyword id="KW-0067">ATP-binding</keyword>
<keyword id="KW-0315">Glutamine amidotransferase</keyword>
<keyword id="KW-0436">Ligase</keyword>
<keyword id="KW-0460">Magnesium</keyword>
<keyword id="KW-0479">Metal-binding</keyword>
<keyword id="KW-0547">Nucleotide-binding</keyword>
<keyword id="KW-0665">Pyrimidine biosynthesis</keyword>
<dbReference type="EC" id="6.3.4.2" evidence="1"/>
<dbReference type="EMBL" id="AP011115">
    <property type="protein sequence ID" value="BAH48911.1"/>
    <property type="molecule type" value="Genomic_DNA"/>
</dbReference>
<dbReference type="RefSeq" id="WP_012687914.1">
    <property type="nucleotide sequence ID" value="NC_012522.1"/>
</dbReference>
<dbReference type="SMR" id="C1ASX9"/>
<dbReference type="STRING" id="632772.ROP_06640"/>
<dbReference type="MEROPS" id="C26.964"/>
<dbReference type="KEGG" id="rop:ROP_06640"/>
<dbReference type="PATRIC" id="fig|632772.20.peg.724"/>
<dbReference type="HOGENOM" id="CLU_011675_5_0_11"/>
<dbReference type="OrthoDB" id="9801107at2"/>
<dbReference type="UniPathway" id="UPA00159">
    <property type="reaction ID" value="UER00277"/>
</dbReference>
<dbReference type="Proteomes" id="UP000002212">
    <property type="component" value="Chromosome"/>
</dbReference>
<dbReference type="GO" id="GO:0005829">
    <property type="term" value="C:cytosol"/>
    <property type="evidence" value="ECO:0007669"/>
    <property type="project" value="TreeGrafter"/>
</dbReference>
<dbReference type="GO" id="GO:0005524">
    <property type="term" value="F:ATP binding"/>
    <property type="evidence" value="ECO:0007669"/>
    <property type="project" value="UniProtKB-KW"/>
</dbReference>
<dbReference type="GO" id="GO:0003883">
    <property type="term" value="F:CTP synthase activity"/>
    <property type="evidence" value="ECO:0007669"/>
    <property type="project" value="UniProtKB-UniRule"/>
</dbReference>
<dbReference type="GO" id="GO:0004359">
    <property type="term" value="F:glutaminase activity"/>
    <property type="evidence" value="ECO:0007669"/>
    <property type="project" value="RHEA"/>
</dbReference>
<dbReference type="GO" id="GO:0042802">
    <property type="term" value="F:identical protein binding"/>
    <property type="evidence" value="ECO:0007669"/>
    <property type="project" value="TreeGrafter"/>
</dbReference>
<dbReference type="GO" id="GO:0046872">
    <property type="term" value="F:metal ion binding"/>
    <property type="evidence" value="ECO:0007669"/>
    <property type="project" value="UniProtKB-KW"/>
</dbReference>
<dbReference type="GO" id="GO:0044210">
    <property type="term" value="P:'de novo' CTP biosynthetic process"/>
    <property type="evidence" value="ECO:0007669"/>
    <property type="project" value="UniProtKB-UniRule"/>
</dbReference>
<dbReference type="GO" id="GO:0019856">
    <property type="term" value="P:pyrimidine nucleobase biosynthetic process"/>
    <property type="evidence" value="ECO:0007669"/>
    <property type="project" value="TreeGrafter"/>
</dbReference>
<dbReference type="CDD" id="cd03113">
    <property type="entry name" value="CTPS_N"/>
    <property type="match status" value="1"/>
</dbReference>
<dbReference type="CDD" id="cd01746">
    <property type="entry name" value="GATase1_CTP_Synthase"/>
    <property type="match status" value="1"/>
</dbReference>
<dbReference type="FunFam" id="3.40.50.300:FF:000009">
    <property type="entry name" value="CTP synthase"/>
    <property type="match status" value="1"/>
</dbReference>
<dbReference type="FunFam" id="3.40.50.880:FF:000002">
    <property type="entry name" value="CTP synthase"/>
    <property type="match status" value="1"/>
</dbReference>
<dbReference type="Gene3D" id="3.40.50.880">
    <property type="match status" value="1"/>
</dbReference>
<dbReference type="Gene3D" id="3.40.50.300">
    <property type="entry name" value="P-loop containing nucleotide triphosphate hydrolases"/>
    <property type="match status" value="1"/>
</dbReference>
<dbReference type="HAMAP" id="MF_01227">
    <property type="entry name" value="PyrG"/>
    <property type="match status" value="1"/>
</dbReference>
<dbReference type="InterPro" id="IPR029062">
    <property type="entry name" value="Class_I_gatase-like"/>
</dbReference>
<dbReference type="InterPro" id="IPR004468">
    <property type="entry name" value="CTP_synthase"/>
</dbReference>
<dbReference type="InterPro" id="IPR017456">
    <property type="entry name" value="CTP_synthase_N"/>
</dbReference>
<dbReference type="InterPro" id="IPR017926">
    <property type="entry name" value="GATASE"/>
</dbReference>
<dbReference type="InterPro" id="IPR033828">
    <property type="entry name" value="GATase1_CTP_Synthase"/>
</dbReference>
<dbReference type="InterPro" id="IPR027417">
    <property type="entry name" value="P-loop_NTPase"/>
</dbReference>
<dbReference type="NCBIfam" id="NF003792">
    <property type="entry name" value="PRK05380.1"/>
    <property type="match status" value="1"/>
</dbReference>
<dbReference type="NCBIfam" id="TIGR00337">
    <property type="entry name" value="PyrG"/>
    <property type="match status" value="1"/>
</dbReference>
<dbReference type="PANTHER" id="PTHR11550">
    <property type="entry name" value="CTP SYNTHASE"/>
    <property type="match status" value="1"/>
</dbReference>
<dbReference type="PANTHER" id="PTHR11550:SF0">
    <property type="entry name" value="CTP SYNTHASE-RELATED"/>
    <property type="match status" value="1"/>
</dbReference>
<dbReference type="Pfam" id="PF06418">
    <property type="entry name" value="CTP_synth_N"/>
    <property type="match status" value="1"/>
</dbReference>
<dbReference type="Pfam" id="PF00117">
    <property type="entry name" value="GATase"/>
    <property type="match status" value="1"/>
</dbReference>
<dbReference type="SUPFAM" id="SSF52317">
    <property type="entry name" value="Class I glutamine amidotransferase-like"/>
    <property type="match status" value="1"/>
</dbReference>
<dbReference type="SUPFAM" id="SSF52540">
    <property type="entry name" value="P-loop containing nucleoside triphosphate hydrolases"/>
    <property type="match status" value="1"/>
</dbReference>
<dbReference type="PROSITE" id="PS51273">
    <property type="entry name" value="GATASE_TYPE_1"/>
    <property type="match status" value="1"/>
</dbReference>
<sequence length="589" mass="63924">MPQSRTHSRTATKHIFVSGGVASSLGKGLTASSLGQLLTARGMRVTMQKLDPYLNVDPGTMNPFQHGEVFVTEDGAETDLDVGHYERFLDRDLSGQANVTTGQVYSTVIAKERRGEYLGDTVQVIPHITDEIKSRILAMSGPDLQGHRPDVVITEIGGTVGDIESQPFLEAARQVRHDVGRDNVFFLHVSLVPYLAPSGELKTKPTQHSVAALRNIGIQPDALILRCDREVPPALKNKIALMCDVDVDGCISTPDAPSIYDIPKVLHSEGLDAYVVRQLGLPFRDVDWTVWGNLLERVHQPRETVRIALVGKYVDLPDAYLSVTEALRAGGFANRSKVEISWVPSDACETEAGAQAALGDVDGVLIPGGFGIRGIEGKLGAIRYARHRKTPLLGLCLGLQCVVIEAARSVGLDDANSAEFEPETTHPVISTMADQEDVIAGEADLGGTMRLGAYPAVLAKGSVVARAYGSEEVSERHRHRYEVNNAYRDRIAKSGLRFSGTSPDGHLVEFVEYPADQHPFFVATQAHPELKSRPTRPHPLFAAFVDAALRHKLEERLPVDVHGEERAAADDEIAESADRDEVASVDSAG</sequence>
<reference key="1">
    <citation type="submission" date="2009-03" db="EMBL/GenBank/DDBJ databases">
        <title>Comparison of the complete genome sequences of Rhodococcus erythropolis PR4 and Rhodococcus opacus B4.</title>
        <authorList>
            <person name="Takarada H."/>
            <person name="Sekine M."/>
            <person name="Hosoyama A."/>
            <person name="Yamada R."/>
            <person name="Fujisawa T."/>
            <person name="Omata S."/>
            <person name="Shimizu A."/>
            <person name="Tsukatani N."/>
            <person name="Tanikawa S."/>
            <person name="Fujita N."/>
            <person name="Harayama S."/>
        </authorList>
    </citation>
    <scope>NUCLEOTIDE SEQUENCE [LARGE SCALE GENOMIC DNA]</scope>
    <source>
        <strain>B4</strain>
    </source>
</reference>
<proteinExistence type="inferred from homology"/>
<organism>
    <name type="scientific">Rhodococcus opacus (strain B4)</name>
    <dbReference type="NCBI Taxonomy" id="632772"/>
    <lineage>
        <taxon>Bacteria</taxon>
        <taxon>Bacillati</taxon>
        <taxon>Actinomycetota</taxon>
        <taxon>Actinomycetes</taxon>
        <taxon>Mycobacteriales</taxon>
        <taxon>Nocardiaceae</taxon>
        <taxon>Rhodococcus</taxon>
    </lineage>
</organism>
<gene>
    <name evidence="1" type="primary">pyrG</name>
    <name type="ordered locus">ROP_06640</name>
</gene>
<name>PYRG_RHOOB</name>
<protein>
    <recommendedName>
        <fullName evidence="1">CTP synthase</fullName>
        <ecNumber evidence="1">6.3.4.2</ecNumber>
    </recommendedName>
    <alternativeName>
        <fullName evidence="1">Cytidine 5'-triphosphate synthase</fullName>
    </alternativeName>
    <alternativeName>
        <fullName evidence="1">Cytidine triphosphate synthetase</fullName>
        <shortName evidence="1">CTP synthetase</shortName>
        <shortName evidence="1">CTPS</shortName>
    </alternativeName>
    <alternativeName>
        <fullName evidence="1">UTP--ammonia ligase</fullName>
    </alternativeName>
</protein>
<accession>C1ASX9</accession>